<evidence type="ECO:0000255" key="1">
    <source>
        <dbReference type="HAMAP-Rule" id="MF_01080"/>
    </source>
</evidence>
<sequence>MGRKRKGRDISGWLVVDKPAGLTSTAVVNKVRWAFDAKKAGHAGTLDPEATGVLAVALGEATKTVPFITDAMKAYTFTVTLGAATNTDDAEGEVIATSAERPTDDDIKEALLGFIGEIQQVPPKFSAVKIDGQRAYKLARDGEEVELSARPLWVEELVMLDRPDADHVVLEMTCGKGGYVRSIARDLGEKLGCLGHVRELRRIWSGPFDAEDGVTLEQIDALAKSPEIDQFLRPLEEGLADLPELKCTPQGATRLRNGNPGMVIASDVEYGEEAWASLEGKAVAVGTFKAGELHPSRVFNQD</sequence>
<gene>
    <name evidence="1" type="primary">truB</name>
    <name type="ordered locus">TM1040_0084</name>
</gene>
<accession>Q1GKJ9</accession>
<comment type="function">
    <text evidence="1">Responsible for synthesis of pseudouridine from uracil-55 in the psi GC loop of transfer RNAs.</text>
</comment>
<comment type="catalytic activity">
    <reaction evidence="1">
        <text>uridine(55) in tRNA = pseudouridine(55) in tRNA</text>
        <dbReference type="Rhea" id="RHEA:42532"/>
        <dbReference type="Rhea" id="RHEA-COMP:10101"/>
        <dbReference type="Rhea" id="RHEA-COMP:10102"/>
        <dbReference type="ChEBI" id="CHEBI:65314"/>
        <dbReference type="ChEBI" id="CHEBI:65315"/>
        <dbReference type="EC" id="5.4.99.25"/>
    </reaction>
</comment>
<comment type="similarity">
    <text evidence="1">Belongs to the pseudouridine synthase TruB family. Type 1 subfamily.</text>
</comment>
<proteinExistence type="inferred from homology"/>
<feature type="chain" id="PRO_1000084684" description="tRNA pseudouridine synthase B">
    <location>
        <begin position="1"/>
        <end position="302"/>
    </location>
</feature>
<feature type="active site" description="Nucleophile" evidence="1">
    <location>
        <position position="47"/>
    </location>
</feature>
<organism>
    <name type="scientific">Ruegeria sp. (strain TM1040)</name>
    <name type="common">Silicibacter sp.</name>
    <dbReference type="NCBI Taxonomy" id="292414"/>
    <lineage>
        <taxon>Bacteria</taxon>
        <taxon>Pseudomonadati</taxon>
        <taxon>Pseudomonadota</taxon>
        <taxon>Alphaproteobacteria</taxon>
        <taxon>Rhodobacterales</taxon>
        <taxon>Roseobacteraceae</taxon>
        <taxon>Ruegeria</taxon>
    </lineage>
</organism>
<reference key="1">
    <citation type="submission" date="2006-05" db="EMBL/GenBank/DDBJ databases">
        <title>Complete sequence of chromosome of Silicibacter sp. TM1040.</title>
        <authorList>
            <consortium name="US DOE Joint Genome Institute"/>
            <person name="Copeland A."/>
            <person name="Lucas S."/>
            <person name="Lapidus A."/>
            <person name="Barry K."/>
            <person name="Detter J.C."/>
            <person name="Glavina del Rio T."/>
            <person name="Hammon N."/>
            <person name="Israni S."/>
            <person name="Dalin E."/>
            <person name="Tice H."/>
            <person name="Pitluck S."/>
            <person name="Brettin T."/>
            <person name="Bruce D."/>
            <person name="Han C."/>
            <person name="Tapia R."/>
            <person name="Goodwin L."/>
            <person name="Thompson L.S."/>
            <person name="Gilna P."/>
            <person name="Schmutz J."/>
            <person name="Larimer F."/>
            <person name="Land M."/>
            <person name="Hauser L."/>
            <person name="Kyrpides N."/>
            <person name="Kim E."/>
            <person name="Belas R."/>
            <person name="Moran M.A."/>
            <person name="Buchan A."/>
            <person name="Gonzalez J.M."/>
            <person name="Schell M.A."/>
            <person name="Sun F."/>
            <person name="Richardson P."/>
        </authorList>
    </citation>
    <scope>NUCLEOTIDE SEQUENCE [LARGE SCALE GENOMIC DNA]</scope>
    <source>
        <strain>TM1040</strain>
    </source>
</reference>
<dbReference type="EC" id="5.4.99.25" evidence="1"/>
<dbReference type="EMBL" id="CP000377">
    <property type="protein sequence ID" value="ABF62817.1"/>
    <property type="molecule type" value="Genomic_DNA"/>
</dbReference>
<dbReference type="RefSeq" id="WP_011537454.1">
    <property type="nucleotide sequence ID" value="NC_008044.1"/>
</dbReference>
<dbReference type="SMR" id="Q1GKJ9"/>
<dbReference type="STRING" id="292414.TM1040_0084"/>
<dbReference type="KEGG" id="sit:TM1040_0084"/>
<dbReference type="eggNOG" id="COG0130">
    <property type="taxonomic scope" value="Bacteria"/>
</dbReference>
<dbReference type="HOGENOM" id="CLU_032087_0_3_5"/>
<dbReference type="OrthoDB" id="9802309at2"/>
<dbReference type="Proteomes" id="UP000000636">
    <property type="component" value="Chromosome"/>
</dbReference>
<dbReference type="GO" id="GO:0003723">
    <property type="term" value="F:RNA binding"/>
    <property type="evidence" value="ECO:0007669"/>
    <property type="project" value="InterPro"/>
</dbReference>
<dbReference type="GO" id="GO:0160148">
    <property type="term" value="F:tRNA pseudouridine(55) synthase activity"/>
    <property type="evidence" value="ECO:0007669"/>
    <property type="project" value="UniProtKB-EC"/>
</dbReference>
<dbReference type="GO" id="GO:1990481">
    <property type="term" value="P:mRNA pseudouridine synthesis"/>
    <property type="evidence" value="ECO:0007669"/>
    <property type="project" value="TreeGrafter"/>
</dbReference>
<dbReference type="GO" id="GO:0031119">
    <property type="term" value="P:tRNA pseudouridine synthesis"/>
    <property type="evidence" value="ECO:0007669"/>
    <property type="project" value="UniProtKB-UniRule"/>
</dbReference>
<dbReference type="CDD" id="cd02573">
    <property type="entry name" value="PseudoU_synth_EcTruB"/>
    <property type="match status" value="1"/>
</dbReference>
<dbReference type="Gene3D" id="3.30.2350.10">
    <property type="entry name" value="Pseudouridine synthase"/>
    <property type="match status" value="1"/>
</dbReference>
<dbReference type="HAMAP" id="MF_01080">
    <property type="entry name" value="TruB_bact"/>
    <property type="match status" value="1"/>
</dbReference>
<dbReference type="InterPro" id="IPR020103">
    <property type="entry name" value="PsdUridine_synth_cat_dom_sf"/>
</dbReference>
<dbReference type="InterPro" id="IPR002501">
    <property type="entry name" value="PsdUridine_synth_N"/>
</dbReference>
<dbReference type="InterPro" id="IPR014780">
    <property type="entry name" value="tRNA_psdUridine_synth_TruB"/>
</dbReference>
<dbReference type="InterPro" id="IPR032819">
    <property type="entry name" value="TruB_C"/>
</dbReference>
<dbReference type="NCBIfam" id="TIGR00431">
    <property type="entry name" value="TruB"/>
    <property type="match status" value="1"/>
</dbReference>
<dbReference type="PANTHER" id="PTHR13767:SF2">
    <property type="entry name" value="PSEUDOURIDYLATE SYNTHASE TRUB1"/>
    <property type="match status" value="1"/>
</dbReference>
<dbReference type="PANTHER" id="PTHR13767">
    <property type="entry name" value="TRNA-PSEUDOURIDINE SYNTHASE"/>
    <property type="match status" value="1"/>
</dbReference>
<dbReference type="Pfam" id="PF16198">
    <property type="entry name" value="TruB_C_2"/>
    <property type="match status" value="1"/>
</dbReference>
<dbReference type="Pfam" id="PF01509">
    <property type="entry name" value="TruB_N"/>
    <property type="match status" value="1"/>
</dbReference>
<dbReference type="SUPFAM" id="SSF55120">
    <property type="entry name" value="Pseudouridine synthase"/>
    <property type="match status" value="1"/>
</dbReference>
<keyword id="KW-0413">Isomerase</keyword>
<keyword id="KW-1185">Reference proteome</keyword>
<keyword id="KW-0819">tRNA processing</keyword>
<name>TRUB_RUEST</name>
<protein>
    <recommendedName>
        <fullName evidence="1">tRNA pseudouridine synthase B</fullName>
        <ecNumber evidence="1">5.4.99.25</ecNumber>
    </recommendedName>
    <alternativeName>
        <fullName evidence="1">tRNA pseudouridine(55) synthase</fullName>
        <shortName evidence="1">Psi55 synthase</shortName>
    </alternativeName>
    <alternativeName>
        <fullName evidence="1">tRNA pseudouridylate synthase</fullName>
    </alternativeName>
    <alternativeName>
        <fullName evidence="1">tRNA-uridine isomerase</fullName>
    </alternativeName>
</protein>